<proteinExistence type="evidence at transcript level"/>
<sequence>MPKVGIIFNDDKPTACSVAQELQEQLQQSGFTVAMETGSGGLLGYSQPDRPICHTRIEHLTPPHFDESMPFAIVLGGDGTVLSAFRQLAPLGIPLLTINTGHMGFLTEIYLNQLPTAIEQLINGDYQIESRSMMTVRLMREENLLWEALSLNEMVLHREPLTSMCHFEIQVGYHASVDIAADGIIVSTPTGSTAYSLSAGGPVVTPDVPVFQLAPICPHSLASRALVFSDLEPVTIFPATPNRMVLVVDGNGGCYVLPEDRVHLSKSPYPAKFIRLQTPEFFRILREKLGWGLPHIAKPTSVELP</sequence>
<reference key="1">
    <citation type="journal article" date="1996" name="DNA Res.">
        <title>Sequence analysis of the genome of the unicellular cyanobacterium Synechocystis sp. strain PCC6803. II. Sequence determination of the entire genome and assignment of potential protein-coding regions.</title>
        <authorList>
            <person name="Kaneko T."/>
            <person name="Sato S."/>
            <person name="Kotani H."/>
            <person name="Tanaka A."/>
            <person name="Asamizu E."/>
            <person name="Nakamura Y."/>
            <person name="Miyajima N."/>
            <person name="Hirosawa M."/>
            <person name="Sugiura M."/>
            <person name="Sasamoto S."/>
            <person name="Kimura T."/>
            <person name="Hosouchi T."/>
            <person name="Matsuno A."/>
            <person name="Muraki A."/>
            <person name="Nakazaki N."/>
            <person name="Naruo K."/>
            <person name="Okumura S."/>
            <person name="Shimpo S."/>
            <person name="Takeuchi C."/>
            <person name="Wada T."/>
            <person name="Watanabe A."/>
            <person name="Yamada M."/>
            <person name="Yasuda M."/>
            <person name="Tabata S."/>
        </authorList>
    </citation>
    <scope>NUCLEOTIDE SEQUENCE [LARGE SCALE GENOMIC DNA]</scope>
    <source>
        <strain>ATCC 27184 / PCC 6803 / Kazusa</strain>
    </source>
</reference>
<reference key="2">
    <citation type="journal article" date="2012" name="J. Bacteriol.">
        <title>The cyanobacterial NAD kinase gene sll1415 is required for photoheterotrophic growth and cellular redox homeostasis in Synechocystis sp. strain PCC 6803.</title>
        <authorList>
            <person name="Gao H."/>
            <person name="Xu X."/>
        </authorList>
    </citation>
    <scope>FUNCTION</scope>
    <scope>DISRUPTION PHENOTYPE</scope>
    <source>
        <strain>ATCC 27184 / PCC 6803 / Kazusa</strain>
    </source>
</reference>
<reference key="3">
    <citation type="journal article" date="2016" name="J. Plant Physiol.">
        <title>Metabolomic analysis of NAD kinase-deficient mutants of the cyanobacterium Synechocystis sp. PCC 6803.</title>
        <authorList>
            <person name="Ishikawa Y."/>
            <person name="Miyagi A."/>
            <person name="Haishima Y."/>
            <person name="Ishikawa T."/>
            <person name="Nagano M."/>
            <person name="Yamaguchi M."/>
            <person name="Hihara Y."/>
            <person name="Kawai-Yamada M."/>
        </authorList>
    </citation>
    <scope>DISRUPTION PHENOTYPE</scope>
    <source>
        <strain>ATCC 27184 / PCC 6803 / Kazusa</strain>
    </source>
</reference>
<reference key="4">
    <citation type="journal article" date="2019" name="Plant J.">
        <title>One of the NAD kinases, sll1415, is required for the glucose metabolism of Synechocystis sp. PCC 6803.</title>
        <authorList>
            <person name="Ishikawa Y."/>
            <person name="Miyagi A."/>
            <person name="Ishikawa T."/>
            <person name="Nagano M."/>
            <person name="Yamaguchi M."/>
            <person name="Hihara Y."/>
            <person name="Kaneko Y."/>
            <person name="Kawai-Yamada M."/>
        </authorList>
    </citation>
    <scope>FUNCTION</scope>
    <scope>INDUCTION</scope>
    <scope>DISRUPTION PHENOTYPE</scope>
    <source>
        <strain>ATCC 27184 / PCC 6803 / Kazusa</strain>
    </source>
</reference>
<reference key="5">
    <citation type="journal article" date="2021" name="Plant Cell Physiol.">
        <title>The NAD kinase Slr0400 functions as a growth repressor in Synechocystis sp. PCC 6803.</title>
        <authorList>
            <person name="Ishikawa Y."/>
            <person name="Cassan C."/>
            <person name="Kadeer A."/>
            <person name="Yuasa K."/>
            <person name="Sato N."/>
            <person name="Sonoike K."/>
            <person name="Kaneko Y."/>
            <person name="Miyagi A."/>
            <person name="Takahashi H."/>
            <person name="Ishikawa T."/>
            <person name="Yamaguchi M."/>
            <person name="Nishiyama Y."/>
            <person name="Hihara Y."/>
            <person name="Gibon Y."/>
            <person name="Kawai-Yamada M."/>
        </authorList>
    </citation>
    <scope>FUNCTION</scope>
    <scope>DISRUPTION PHENOTYPE</scope>
    <source>
        <strain>ATCC 27184 / PCC 6803 / Kazusa</strain>
    </source>
</reference>
<protein>
    <recommendedName>
        <fullName evidence="1">NAD kinase 2</fullName>
        <ecNumber evidence="1 6 7 8">2.7.1.23</ecNumber>
    </recommendedName>
    <alternativeName>
        <fullName evidence="1">ATP-dependent NAD kinase 2</fullName>
    </alternativeName>
</protein>
<organism>
    <name type="scientific">Synechocystis sp. (strain ATCC 27184 / PCC 6803 / Kazusa)</name>
    <dbReference type="NCBI Taxonomy" id="1111708"/>
    <lineage>
        <taxon>Bacteria</taxon>
        <taxon>Bacillati</taxon>
        <taxon>Cyanobacteriota</taxon>
        <taxon>Cyanophyceae</taxon>
        <taxon>Synechococcales</taxon>
        <taxon>Merismopediaceae</taxon>
        <taxon>Synechocystis</taxon>
    </lineage>
</organism>
<gene>
    <name evidence="1" type="primary">nadK2</name>
    <name type="ordered locus">slr0400</name>
</gene>
<evidence type="ECO:0000255" key="1">
    <source>
        <dbReference type="HAMAP-Rule" id="MF_00361"/>
    </source>
</evidence>
<evidence type="ECO:0000269" key="2">
    <source>
    </source>
</evidence>
<evidence type="ECO:0000269" key="3">
    <source>
    </source>
</evidence>
<evidence type="ECO:0000269" key="4">
    <source>
    </source>
</evidence>
<evidence type="ECO:0000269" key="5">
    <source>
    </source>
</evidence>
<evidence type="ECO:0000305" key="6">
    <source>
    </source>
</evidence>
<evidence type="ECO:0000305" key="7">
    <source>
    </source>
</evidence>
<evidence type="ECO:0000305" key="8">
    <source>
    </source>
</evidence>
<name>NADK2_SYNY3</name>
<feature type="chain" id="PRO_0000120678" description="NAD kinase 2">
    <location>
        <begin position="1"/>
        <end position="305"/>
    </location>
</feature>
<feature type="active site" description="Proton acceptor" evidence="1">
    <location>
        <position position="78"/>
    </location>
</feature>
<feature type="binding site" evidence="1">
    <location>
        <begin position="78"/>
        <end position="79"/>
    </location>
    <ligand>
        <name>NAD(+)</name>
        <dbReference type="ChEBI" id="CHEBI:57540"/>
    </ligand>
</feature>
<feature type="binding site" evidence="1">
    <location>
        <begin position="152"/>
        <end position="153"/>
    </location>
    <ligand>
        <name>NAD(+)</name>
        <dbReference type="ChEBI" id="CHEBI:57540"/>
    </ligand>
</feature>
<feature type="binding site" evidence="1">
    <location>
        <position position="182"/>
    </location>
    <ligand>
        <name>NAD(+)</name>
        <dbReference type="ChEBI" id="CHEBI:57540"/>
    </ligand>
</feature>
<feature type="binding site" evidence="1">
    <location>
        <begin position="193"/>
        <end position="198"/>
    </location>
    <ligand>
        <name>NAD(+)</name>
        <dbReference type="ChEBI" id="CHEBI:57540"/>
    </ligand>
</feature>
<feature type="binding site" evidence="1">
    <location>
        <position position="251"/>
    </location>
    <ligand>
        <name>NAD(+)</name>
        <dbReference type="ChEBI" id="CHEBI:57540"/>
    </ligand>
</feature>
<accession>P74430</accession>
<comment type="function">
    <text evidence="2 4 5">Involved in the regulation of the intracellular balance of NAD and NADP, and is a key enzyme in the biosynthesis of NADP. Catalyzes specifically the phosphorylation on 2'-hydroxyl of the adenosine moiety of NAD to yield NADP (PubMed:22056937, PubMed:30693583). Functions as a growth repressor under light-activated heterotrophic growth conditions and light and dark cycle conditions in the presence of glucose (PubMed:33560438). NADP(H)/NAD(H) maintenance by slr0400 probably plays a significant role in modulating glycolysis and the TCA cycle to repress the growth rate and maintain the photosynthetic capacity (PubMed:33560438).</text>
</comment>
<comment type="catalytic activity">
    <reaction evidence="1 6 7 8">
        <text>NAD(+) + ATP = ADP + NADP(+) + H(+)</text>
        <dbReference type="Rhea" id="RHEA:18629"/>
        <dbReference type="ChEBI" id="CHEBI:15378"/>
        <dbReference type="ChEBI" id="CHEBI:30616"/>
        <dbReference type="ChEBI" id="CHEBI:57540"/>
        <dbReference type="ChEBI" id="CHEBI:58349"/>
        <dbReference type="ChEBI" id="CHEBI:456216"/>
        <dbReference type="EC" id="2.7.1.23"/>
    </reaction>
</comment>
<comment type="cofactor">
    <cofactor evidence="1">
        <name>a divalent metal cation</name>
        <dbReference type="ChEBI" id="CHEBI:60240"/>
    </cofactor>
</comment>
<comment type="subcellular location">
    <subcellularLocation>
        <location evidence="1">Cytoplasm</location>
    </subcellularLocation>
</comment>
<comment type="induction">
    <text evidence="4">Expression decreases after transfer to photoheterotrophic conditions.</text>
</comment>
<comment type="disruption phenotype">
    <text evidence="2 3 4 5">Insertion mutant shows a slight decrease in NADK activity compared to the wild-type (PubMed:22056937, PubMed:27657983). Under photoheterotrophic conditions, mutation does not affect growth rate (PubMed:22056937, PubMed:30693583). Under photoautotrophic conditions, the growth curves of the wild-type parent and the mutant do not show any differences, but mutant shows large differences in NAD(P)(H) levels along with massive changes in metabolite profile (PubMed:27657983). Mutant exhibits a fast-growth phenotype under light-activated heterotrophic growth conditions and light and dark cycle conditions in the presence of glucose (PubMed:33560438).</text>
</comment>
<comment type="miscellaneous">
    <text evidence="2 3 4">NADK activity derived from sll1415 makes probably a larger contribution to total cellular NADK activity than activity derived from slr0400 (PubMed:22056937, PubMed:27657983). Slr0400 cannot functionally replace sll1415 under photoheterotrophic conditions (PubMed:30693583).</text>
</comment>
<comment type="similarity">
    <text evidence="1">Belongs to the NAD kinase family.</text>
</comment>
<dbReference type="EC" id="2.7.1.23" evidence="1 6 7 8"/>
<dbReference type="EMBL" id="BA000022">
    <property type="protein sequence ID" value="BAA18530.1"/>
    <property type="molecule type" value="Genomic_DNA"/>
</dbReference>
<dbReference type="PIR" id="S76401">
    <property type="entry name" value="S76401"/>
</dbReference>
<dbReference type="SMR" id="P74430"/>
<dbReference type="FunCoup" id="P74430">
    <property type="interactions" value="463"/>
</dbReference>
<dbReference type="STRING" id="1148.gene:10499411"/>
<dbReference type="PaxDb" id="1148-1653618"/>
<dbReference type="EnsemblBacteria" id="BAA18530">
    <property type="protein sequence ID" value="BAA18530"/>
    <property type="gene ID" value="BAA18530"/>
</dbReference>
<dbReference type="KEGG" id="syn:slr0400"/>
<dbReference type="eggNOG" id="COG0061">
    <property type="taxonomic scope" value="Bacteria"/>
</dbReference>
<dbReference type="InParanoid" id="P74430"/>
<dbReference type="PhylomeDB" id="P74430"/>
<dbReference type="BRENDA" id="2.7.1.23">
    <property type="organism ID" value="382"/>
</dbReference>
<dbReference type="Proteomes" id="UP000001425">
    <property type="component" value="Chromosome"/>
</dbReference>
<dbReference type="GO" id="GO:0005737">
    <property type="term" value="C:cytoplasm"/>
    <property type="evidence" value="ECO:0007669"/>
    <property type="project" value="UniProtKB-SubCell"/>
</dbReference>
<dbReference type="GO" id="GO:0005524">
    <property type="term" value="F:ATP binding"/>
    <property type="evidence" value="ECO:0007669"/>
    <property type="project" value="UniProtKB-KW"/>
</dbReference>
<dbReference type="GO" id="GO:0046872">
    <property type="term" value="F:metal ion binding"/>
    <property type="evidence" value="ECO:0007669"/>
    <property type="project" value="UniProtKB-UniRule"/>
</dbReference>
<dbReference type="GO" id="GO:0051287">
    <property type="term" value="F:NAD binding"/>
    <property type="evidence" value="ECO:0007669"/>
    <property type="project" value="UniProtKB-ARBA"/>
</dbReference>
<dbReference type="GO" id="GO:0003951">
    <property type="term" value="F:NAD+ kinase activity"/>
    <property type="evidence" value="ECO:0000318"/>
    <property type="project" value="GO_Central"/>
</dbReference>
<dbReference type="GO" id="GO:0019674">
    <property type="term" value="P:NAD metabolic process"/>
    <property type="evidence" value="ECO:0007669"/>
    <property type="project" value="InterPro"/>
</dbReference>
<dbReference type="GO" id="GO:0006741">
    <property type="term" value="P:NADP biosynthetic process"/>
    <property type="evidence" value="ECO:0000318"/>
    <property type="project" value="GO_Central"/>
</dbReference>
<dbReference type="Gene3D" id="3.40.50.10330">
    <property type="entry name" value="Probable inorganic polyphosphate/atp-NAD kinase, domain 1"/>
    <property type="match status" value="1"/>
</dbReference>
<dbReference type="Gene3D" id="2.60.200.30">
    <property type="entry name" value="Probable inorganic polyphosphate/atp-NAD kinase, domain 2"/>
    <property type="match status" value="1"/>
</dbReference>
<dbReference type="HAMAP" id="MF_00361">
    <property type="entry name" value="NAD_kinase"/>
    <property type="match status" value="1"/>
</dbReference>
<dbReference type="InterPro" id="IPR017438">
    <property type="entry name" value="ATP-NAD_kinase_N"/>
</dbReference>
<dbReference type="InterPro" id="IPR017437">
    <property type="entry name" value="ATP-NAD_kinase_PpnK-typ_C"/>
</dbReference>
<dbReference type="InterPro" id="IPR016064">
    <property type="entry name" value="NAD/diacylglycerol_kinase_sf"/>
</dbReference>
<dbReference type="InterPro" id="IPR002504">
    <property type="entry name" value="NADK"/>
</dbReference>
<dbReference type="NCBIfam" id="NF002732">
    <property type="entry name" value="PRK02649.1"/>
    <property type="match status" value="1"/>
</dbReference>
<dbReference type="PANTHER" id="PTHR20275">
    <property type="entry name" value="NAD KINASE"/>
    <property type="match status" value="1"/>
</dbReference>
<dbReference type="PANTHER" id="PTHR20275:SF13">
    <property type="entry name" value="NAD KINASE 2"/>
    <property type="match status" value="1"/>
</dbReference>
<dbReference type="Pfam" id="PF01513">
    <property type="entry name" value="NAD_kinase"/>
    <property type="match status" value="1"/>
</dbReference>
<dbReference type="Pfam" id="PF20143">
    <property type="entry name" value="NAD_kinase_C"/>
    <property type="match status" value="1"/>
</dbReference>
<dbReference type="SUPFAM" id="SSF111331">
    <property type="entry name" value="NAD kinase/diacylglycerol kinase-like"/>
    <property type="match status" value="1"/>
</dbReference>
<keyword id="KW-0067">ATP-binding</keyword>
<keyword id="KW-0963">Cytoplasm</keyword>
<keyword id="KW-0418">Kinase</keyword>
<keyword id="KW-0520">NAD</keyword>
<keyword id="KW-0521">NADP</keyword>
<keyword id="KW-0547">Nucleotide-binding</keyword>
<keyword id="KW-1185">Reference proteome</keyword>
<keyword id="KW-0808">Transferase</keyword>